<comment type="function">
    <text evidence="1">The large envelope protein exists in two topological conformations, one which is termed 'external' or Le-HBsAg and the other 'internal' or Li-HBsAg. In its external conformation the protein attaches the virus to cell receptors and thereby initiating infection. This interaction determines the species specificity and liver tropism. The large envelope protein probably also assumes fusion between virion and host membranes. In its internal conformation the protein plays a role in virion morphogenesis and mediates the contact with the nucleocapsid like a matrix protein (By similarity).</text>
</comment>
<comment type="function">
    <text>Truncated S protein may be involved in translocation of pre-S domain through the virion membrane.</text>
</comment>
<comment type="subunit">
    <text evidence="1">Large internal envelope protein interacts with capsid protein.</text>
</comment>
<comment type="subcellular location">
    <subcellularLocation>
        <location>Virion membrane</location>
    </subcellularLocation>
</comment>
<comment type="alternative products">
    <event type="alternative initiation"/>
    <isoform>
        <id>P03145-1</id>
        <name>L</name>
        <name>Large envelope protein</name>
        <name>LHB</name>
        <name>L-HBsAg</name>
        <sequence type="displayed"/>
    </isoform>
    <isoform>
        <id>P03145-2</id>
        <name>S</name>
        <name>Small envelope protein</name>
        <name>SHB</name>
        <name>S-HBsAg</name>
        <sequence type="described" ref="VSP_031887"/>
    </isoform>
</comment>
<comment type="domain">
    <text>The large envelope protein is synthesized with the pre-S region at the cytosolic side of the endoplasmic reticulum and, hence will be within the virion after budding. Therefore the pre-S region is not N-glycosylated. Later a post-translational translocation of N-terminal pre-S and TM1 domains occur in about 50% of proteins at the virion surface. These molecules change their topology by an unknown mechanism, resulting in exposure of pre-S region at virion surface.</text>
</comment>
<comment type="PTM">
    <text evidence="5">Myristoylation contributes importantly to DHBV infectivity. It is most likely required for an early step of the life cycle involving the entry or uncoating of virus particles.</text>
</comment>
<comment type="PTM">
    <text evidence="6 7">Phosphorylated on pre-S domain for about 50% of L proteins, the L chains with internal pre-S region (Li-HBsAg).</text>
</comment>
<comment type="PTM">
    <text>Isoform S may be cleaved by a cellular protease to produce truncated S protein.</text>
</comment>
<comment type="similarity">
    <text evidence="8">Belongs to the avihepadnavirus major surface antigen family.</text>
</comment>
<reference key="1">
    <citation type="journal article" date="1984" name="J. Virol.">
        <title>Nucleotide sequence of a cloned duck hepatitis B virus genome: comparison with woodchuck and human hepatitis B virus sequences.</title>
        <authorList>
            <person name="Mandart E."/>
            <person name="Kay A."/>
            <person name="Galibert F."/>
        </authorList>
    </citation>
    <scope>NUCLEOTIDE SEQUENCE [GENOMIC DNA]</scope>
</reference>
<reference key="2">
    <citation type="journal article" date="1990" name="Nucleic Acids Res.">
        <title>Complete nucleotide sequence of a German duck hepatitis B virus.</title>
        <authorList>
            <person name="Mattes F."/>
            <person name="Tong S."/>
            <person name="Teubner K."/>
            <person name="Blum H.E."/>
        </authorList>
    </citation>
    <scope>NUCLEOTIDE SEQUENCE [GENOMIC DNA]</scope>
    <source>
        <strain>Isolate DHBV F1-6</strain>
    </source>
</reference>
<reference key="3">
    <citation type="journal article" date="1991" name="Virology">
        <title>Myristylation of a duck hepatitis B virus envelope protein is essential for infectivity but not for virus assembly.</title>
        <authorList>
            <person name="Macrae D.R."/>
            <person name="Bruss V."/>
            <person name="Ganem D."/>
        </authorList>
    </citation>
    <scope>MYRISTOYLATION AT GLY-2</scope>
</reference>
<reference key="4">
    <citation type="journal article" date="1994" name="J. Virol.">
        <title>The large surface protein of duck hepatitis B virus is phosphorylated in the pre-S domain.</title>
        <authorList>
            <person name="Grgacic E.V."/>
            <person name="Anderson D.A."/>
        </authorList>
    </citation>
    <scope>PHOSPHORYLATION</scope>
</reference>
<reference key="5">
    <citation type="journal article" date="1998" name="J. Gen. Virol.">
        <title>Normal phosphorylation of duck hepatitis B virus L protein is dispensable for infectivity.</title>
        <authorList>
            <person name="Grgacic E.V."/>
            <person name="Lin B."/>
            <person name="Gazina E.V."/>
            <person name="Snooks M.J."/>
            <person name="Anderson D.A."/>
        </authorList>
    </citation>
    <scope>PHOSPHORYLATION AT SER-118</scope>
    <scope>MUTAGENESIS OF SER-118</scope>
</reference>
<reference key="6">
    <citation type="journal article" date="2002" name="J. Gen. Virol.">
        <title>Identification of structural determinants of the first transmembrane domain of the small envelope protein of duck hepatitis B virus essential for particle morphogenesis.</title>
        <authorList>
            <person name="Grgacic E.V."/>
        </authorList>
    </citation>
    <scope>MUTAGENESIS OF 185-LYS--GLU-188</scope>
</reference>
<reference key="7">
    <citation type="journal article" date="2005" name="J. Virol.">
        <title>St, a truncated envelope protein derived from the S protein of duck hepatitis B virus, acts as a chaperone for the folding of the large envelope protein.</title>
        <authorList>
            <person name="Grgacic E.V."/>
            <person name="Anderson D.A."/>
        </authorList>
    </citation>
    <scope>CHARACTERIZATION OF TRUNCATED S PROTEIN</scope>
</reference>
<keyword id="KW-0024">Alternative initiation</keyword>
<keyword id="KW-1168">Fusion of virus membrane with host membrane</keyword>
<keyword id="KW-0325">Glycoprotein</keyword>
<keyword id="KW-0945">Host-virus interaction</keyword>
<keyword id="KW-0449">Lipoprotein</keyword>
<keyword id="KW-0472">Membrane</keyword>
<keyword id="KW-0519">Myristate</keyword>
<keyword id="KW-0597">Phosphoprotein</keyword>
<keyword id="KW-1185">Reference proteome</keyword>
<keyword id="KW-0812">Transmembrane</keyword>
<keyword id="KW-1133">Transmembrane helix</keyword>
<keyword id="KW-1161">Viral attachment to host cell</keyword>
<keyword id="KW-0261">Viral envelope protein</keyword>
<keyword id="KW-1162">Viral penetration into host cytoplasm</keyword>
<keyword id="KW-0946">Virion</keyword>
<keyword id="KW-1160">Virus entry into host cell</keyword>
<feature type="initiator methionine" description="Removed; by host" evidence="1">
    <location>
        <position position="1"/>
    </location>
</feature>
<feature type="chain" id="PRO_0000038075" description="Large envelope protein">
    <location>
        <begin position="2"/>
        <end position="328"/>
    </location>
</feature>
<feature type="chain" id="PRO_0000322196" description="Truncated S protein">
    <location>
        <begin position="162"/>
        <end position="238" status="uncertain"/>
    </location>
</feature>
<feature type="topological domain" description="Cytoplasmic; in internal conformation" evidence="2">
    <location>
        <begin position="2"/>
        <end position="236"/>
    </location>
</feature>
<feature type="topological domain" description="Extracellular; in external conformation" evidence="2">
    <location>
        <begin position="2"/>
        <end position="163"/>
    </location>
</feature>
<feature type="transmembrane region" description="Helical; Name=TM1; Note=In external conformation" evidence="2">
    <location>
        <begin position="164"/>
        <end position="184"/>
    </location>
</feature>
<feature type="topological domain" description="Cytoplasmic; in external conformation" evidence="2">
    <location>
        <begin position="185"/>
        <end position="236"/>
    </location>
</feature>
<feature type="transmembrane region" description="Helical; Name=TM2" evidence="2">
    <location>
        <begin position="237"/>
        <end position="257"/>
    </location>
</feature>
<feature type="topological domain" description="Extracellular" evidence="2">
    <location>
        <begin position="258"/>
        <end position="282"/>
    </location>
</feature>
<feature type="transmembrane region" description="Helical; Name=TM3" evidence="2">
    <location>
        <begin position="283"/>
        <end position="303"/>
    </location>
</feature>
<feature type="topological domain" description="Cytoplasmic" evidence="2">
    <location>
        <begin position="304"/>
        <end position="328"/>
    </location>
</feature>
<feature type="region of interest" description="Pre-S">
    <location>
        <begin position="2"/>
        <end position="161"/>
    </location>
</feature>
<feature type="region of interest" description="Disordered" evidence="3">
    <location>
        <begin position="63"/>
        <end position="128"/>
    </location>
</feature>
<feature type="compositionally biased region" description="Polar residues" evidence="3">
    <location>
        <begin position="76"/>
        <end position="88"/>
    </location>
</feature>
<feature type="compositionally biased region" description="Basic and acidic residues" evidence="3">
    <location>
        <begin position="92"/>
        <end position="109"/>
    </location>
</feature>
<feature type="site" description="Cleavage; by host" evidence="2">
    <location>
        <begin position="238" status="uncertain"/>
        <end position="239" status="uncertain"/>
    </location>
</feature>
<feature type="modified residue" description="Phosphoserine; by host" evidence="7">
    <location>
        <position position="118"/>
    </location>
</feature>
<feature type="lipid moiety-binding region" description="N-myristoyl glycine; by host" evidence="5">
    <location>
        <position position="2"/>
    </location>
</feature>
<feature type="glycosylation site" description="N-linked (GlcNAc...) asparagine; by host" evidence="2">
    <location>
        <position position="260"/>
    </location>
</feature>
<feature type="splice variant" id="VSP_031887" description="In isoform S." evidence="8">
    <location>
        <begin position="1"/>
        <end position="161"/>
    </location>
</feature>
<feature type="mutagenesis site" description="64% loss of phosphorylation." evidence="7">
    <original>S</original>
    <variation>A</variation>
    <location>
        <position position="118"/>
    </location>
</feature>
<feature type="mutagenesis site" description="Complete loss of pre-S domain translocation." evidence="4">
    <original>KILE</original>
    <variation>AILA</variation>
    <location>
        <begin position="185"/>
        <end position="188"/>
    </location>
</feature>
<accession>P03145</accession>
<dbReference type="EMBL" id="X12798">
    <property type="protein sequence ID" value="CAB57224.1"/>
    <property type="molecule type" value="Genomic_DNA"/>
</dbReference>
<dbReference type="SMR" id="P03145"/>
<dbReference type="GlyCosmos" id="P03145">
    <property type="glycosylation" value="1 site, No reported glycans"/>
</dbReference>
<dbReference type="iPTMnet" id="P03145"/>
<dbReference type="Proteomes" id="UP000007203">
    <property type="component" value="Genome"/>
</dbReference>
<dbReference type="GO" id="GO:0016020">
    <property type="term" value="C:membrane"/>
    <property type="evidence" value="ECO:0007669"/>
    <property type="project" value="UniProtKB-KW"/>
</dbReference>
<dbReference type="GO" id="GO:0019031">
    <property type="term" value="C:viral envelope"/>
    <property type="evidence" value="ECO:0007669"/>
    <property type="project" value="UniProtKB-KW"/>
</dbReference>
<dbReference type="GO" id="GO:0055036">
    <property type="term" value="C:virion membrane"/>
    <property type="evidence" value="ECO:0007669"/>
    <property type="project" value="UniProtKB-SubCell"/>
</dbReference>
<dbReference type="GO" id="GO:0039663">
    <property type="term" value="P:membrane fusion involved in viral entry into host cell"/>
    <property type="evidence" value="ECO:0007669"/>
    <property type="project" value="UniProtKB-KW"/>
</dbReference>
<dbReference type="GO" id="GO:0046718">
    <property type="term" value="P:symbiont entry into host cell"/>
    <property type="evidence" value="ECO:0007669"/>
    <property type="project" value="UniProtKB-KW"/>
</dbReference>
<dbReference type="GO" id="GO:0019062">
    <property type="term" value="P:virion attachment to host cell"/>
    <property type="evidence" value="ECO:0007669"/>
    <property type="project" value="UniProtKB-KW"/>
</dbReference>
<dbReference type="InterPro" id="IPR000349">
    <property type="entry name" value="HBV_HBSAG"/>
</dbReference>
<dbReference type="Pfam" id="PF00695">
    <property type="entry name" value="vMSA"/>
    <property type="match status" value="2"/>
</dbReference>
<sequence>MGQHPAKSMDVRRIEGGEILLNQLAGRMIPKGTLTWSGKFPTLDHVLDHVQTMEEINTLQNQGAWPAGAGRRVGLSNPTPQEIPQPQWTPEEDQKAREAFRRYQEERPPETTTIPPSSPPQWKLQPGDDPLLGNQSLLETHPLYQSEPAVPVIKTPPLKKKMSGTFGGILAGLIGLLVSFFLLIKILEILRRLDWWWISLSSPKGKMQCAFQDTGAQISPHYVGSCPWGCPGFLWTYLRLFIIFLLILLVAAGLLYLTDNGSTILGKLQWASVSALFSSISSLLPSDPKSLVALTFGLSLIWMTSSSATQTLVTLTQLATLSALFYKS</sequence>
<proteinExistence type="evidence at protein level"/>
<name>HBSAG_DHBV1</name>
<organism>
    <name type="scientific">Duck hepatitis B virus (strain United States/DHBV-16)</name>
    <name type="common">DHBV</name>
    <dbReference type="NCBI Taxonomy" id="489543"/>
    <lineage>
        <taxon>Viruses</taxon>
        <taxon>Riboviria</taxon>
        <taxon>Pararnavirae</taxon>
        <taxon>Artverviricota</taxon>
        <taxon>Revtraviricetes</taxon>
        <taxon>Blubervirales</taxon>
        <taxon>Hepadnaviridae</taxon>
        <taxon>Avihepadnavirus</taxon>
        <taxon>Duck hepatitis B virus</taxon>
    </lineage>
</organism>
<organismHost>
    <name type="scientific">Anas</name>
    <name type="common">ducks</name>
    <dbReference type="NCBI Taxonomy" id="8835"/>
</organismHost>
<protein>
    <recommendedName>
        <fullName>Large envelope protein</fullName>
    </recommendedName>
    <alternativeName>
        <fullName>L glycoprotein</fullName>
    </alternativeName>
    <alternativeName>
        <fullName>L-HBsAg</fullName>
        <shortName>LHB</shortName>
    </alternativeName>
    <alternativeName>
        <fullName>Large S protein</fullName>
    </alternativeName>
    <alternativeName>
        <fullName>Large surface protein</fullName>
    </alternativeName>
    <alternativeName>
        <fullName>Major surface antigen</fullName>
    </alternativeName>
    <component>
        <recommendedName>
            <fullName>Truncated S protein</fullName>
            <shortName>St</shortName>
        </recommendedName>
    </component>
</protein>
<evidence type="ECO:0000250" key="1"/>
<evidence type="ECO:0000255" key="2"/>
<evidence type="ECO:0000256" key="3">
    <source>
        <dbReference type="SAM" id="MobiDB-lite"/>
    </source>
</evidence>
<evidence type="ECO:0000269" key="4">
    <source>
    </source>
</evidence>
<evidence type="ECO:0000269" key="5">
    <source>
    </source>
</evidence>
<evidence type="ECO:0000269" key="6">
    <source>
    </source>
</evidence>
<evidence type="ECO:0000269" key="7">
    <source>
    </source>
</evidence>
<evidence type="ECO:0000305" key="8"/>
<gene>
    <name type="primary">S</name>
</gene>